<protein>
    <recommendedName>
        <fullName>Clusterin</fullName>
    </recommendedName>
    <alternativeName>
        <fullName>51.5 kDa protein</fullName>
    </alternativeName>
    <component>
        <recommendedName>
            <fullName>Clusterin beta chain</fullName>
        </recommendedName>
    </component>
    <component>
        <recommendedName>
            <fullName>Clusterin alpha chain</fullName>
        </recommendedName>
    </component>
</protein>
<sequence length="451" mass="51801">MELPLLALLSLGLVCQGGQGLVPPNELKQLSAAGSKYIDAEVENAINGVKQMKTLMDKTSKEHQAMLHTLEETKKKKEEAVKLALEKEKQLAEKQEVCNETMLSLWEECKPCLKHTCMRVYSKMCHSGSGLVGRQLEEFLNRSSPFSIWVNGERIDDLLDREQRQERRFEDLEERFGLMEDGVEDIFQDSTQLYGPAFPFFRTPPFGGFREAFVPPVQRVHLVPRRRLSRELHPFFQHPMHGFHRLFQPLFEMTQHMLDGGHGAWEHPLGGFATESRNFSTDRMVCREIRRNSAGCLRMRDECEKCREILAVDCSQTDPVQSQLREQFEDALRLAERFTRRYDDLLSAFQAEMLNTSSLLDQLNRQFGWVSRLGNLTQGNDGFLQVTTVFSKTPNLEDPSAPADTQVTVQLFDSEPLSLTVPGDISWDDPRFMEIVAEQALQHYKQNNTIE</sequence>
<feature type="signal peptide" evidence="2">
    <location>
        <begin position="1"/>
        <end position="18"/>
    </location>
</feature>
<feature type="chain" id="PRO_0000005549" description="Clusterin">
    <location>
        <begin position="19"/>
        <end position="451"/>
    </location>
</feature>
<feature type="chain" id="PRO_0000005550" description="Clusterin beta chain" evidence="2">
    <location>
        <begin position="19"/>
        <end position="230"/>
    </location>
</feature>
<feature type="chain" id="PRO_0000005551" description="Clusterin alpha chain" evidence="2">
    <location>
        <begin position="231"/>
        <end position="451"/>
    </location>
</feature>
<feature type="glycosylation site" description="N-linked (GlcNAc...) asparagine" evidence="2">
    <location>
        <position position="99"/>
    </location>
</feature>
<feature type="glycosylation site" description="N-linked (GlcNAc...) asparagine" evidence="2">
    <location>
        <position position="141"/>
    </location>
</feature>
<feature type="glycosylation site" description="N-linked (GlcNAc...) asparagine" evidence="2">
    <location>
        <position position="278"/>
    </location>
</feature>
<feature type="glycosylation site" description="N-linked (GlcNAc...) asparagine" evidence="2">
    <location>
        <position position="355"/>
    </location>
</feature>
<feature type="glycosylation site" description="N-linked (GlcNAc...) asparagine" evidence="2">
    <location>
        <position position="375"/>
    </location>
</feature>
<feature type="glycosylation site" description="N-linked (GlcNAc...) asparagine" evidence="2">
    <location>
        <position position="447"/>
    </location>
</feature>
<feature type="disulfide bond" description="Interchain (between beta and alpha chains)" evidence="1">
    <location>
        <begin position="98"/>
        <end position="314"/>
    </location>
</feature>
<feature type="disulfide bond" description="Interchain (between beta and alpha chains)" evidence="1">
    <location>
        <begin position="109"/>
        <end position="306"/>
    </location>
</feature>
<feature type="disulfide bond" description="Interchain (between beta and alpha chains)" evidence="1">
    <location>
        <begin position="112"/>
        <end position="303"/>
    </location>
</feature>
<feature type="disulfide bond" description="Interchain (between beta and alpha chains)" evidence="1">
    <location>
        <begin position="117"/>
        <end position="296"/>
    </location>
</feature>
<feature type="disulfide bond" description="Interchain (between beta and alpha chains)" evidence="1">
    <location>
        <begin position="125"/>
        <end position="286"/>
    </location>
</feature>
<feature type="sequence conflict" description="In Ref. 1; CAA33823." evidence="3" ref="1">
    <original>A</original>
    <variation>P</variation>
    <location>
        <position position="437"/>
    </location>
</feature>
<feature type="sequence conflict" description="In Ref. 1; CAA33823." evidence="3" ref="1">
    <original>KQNNTIE</original>
    <variation>SRTTP</variation>
    <location>
        <begin position="445"/>
        <end position="451"/>
    </location>
</feature>
<gene>
    <name type="primary">CLU</name>
    <name type="synonym">T64</name>
</gene>
<dbReference type="EMBL" id="X15825">
    <property type="protein sequence ID" value="CAA33823.1"/>
    <property type="molecule type" value="mRNA"/>
</dbReference>
<dbReference type="EMBL" id="X80760">
    <property type="protein sequence ID" value="CAA56733.1"/>
    <property type="molecule type" value="Genomic_DNA"/>
</dbReference>
<dbReference type="PIR" id="S07714">
    <property type="entry name" value="S07714"/>
</dbReference>
<dbReference type="SMR" id="P14018"/>
<dbReference type="GlyCosmos" id="P14018">
    <property type="glycosylation" value="6 sites, No reported glycans"/>
</dbReference>
<dbReference type="Proteomes" id="UP000694412">
    <property type="component" value="Unplaced"/>
</dbReference>
<dbReference type="GO" id="GO:0042583">
    <property type="term" value="C:chromaffin granule"/>
    <property type="evidence" value="ECO:0007669"/>
    <property type="project" value="UniProtKB-SubCell"/>
</dbReference>
<dbReference type="GO" id="GO:0005737">
    <property type="term" value="C:cytoplasm"/>
    <property type="evidence" value="ECO:0000250"/>
    <property type="project" value="UniProtKB"/>
</dbReference>
<dbReference type="GO" id="GO:0005829">
    <property type="term" value="C:cytosol"/>
    <property type="evidence" value="ECO:0007669"/>
    <property type="project" value="UniProtKB-SubCell"/>
</dbReference>
<dbReference type="GO" id="GO:0005783">
    <property type="term" value="C:endoplasmic reticulum"/>
    <property type="evidence" value="ECO:0007669"/>
    <property type="project" value="UniProtKB-SubCell"/>
</dbReference>
<dbReference type="GO" id="GO:0005615">
    <property type="term" value="C:extracellular space"/>
    <property type="evidence" value="ECO:0007669"/>
    <property type="project" value="TreeGrafter"/>
</dbReference>
<dbReference type="GO" id="GO:0005743">
    <property type="term" value="C:mitochondrial inner membrane"/>
    <property type="evidence" value="ECO:0000250"/>
    <property type="project" value="UniProtKB"/>
</dbReference>
<dbReference type="GO" id="GO:0005634">
    <property type="term" value="C:nucleus"/>
    <property type="evidence" value="ECO:0000250"/>
    <property type="project" value="UniProtKB"/>
</dbReference>
<dbReference type="GO" id="GO:0051787">
    <property type="term" value="F:misfolded protein binding"/>
    <property type="evidence" value="ECO:0007669"/>
    <property type="project" value="TreeGrafter"/>
</dbReference>
<dbReference type="GO" id="GO:0043065">
    <property type="term" value="P:positive regulation of apoptotic process"/>
    <property type="evidence" value="ECO:0000250"/>
    <property type="project" value="UniProtKB"/>
</dbReference>
<dbReference type="GO" id="GO:0032436">
    <property type="term" value="P:positive regulation of proteasomal ubiquitin-dependent protein catabolic process"/>
    <property type="evidence" value="ECO:0007669"/>
    <property type="project" value="TreeGrafter"/>
</dbReference>
<dbReference type="GO" id="GO:0048260">
    <property type="term" value="P:positive regulation of receptor-mediated endocytosis"/>
    <property type="evidence" value="ECO:0000250"/>
    <property type="project" value="UniProtKB"/>
</dbReference>
<dbReference type="GO" id="GO:0050821">
    <property type="term" value="P:protein stabilization"/>
    <property type="evidence" value="ECO:0000250"/>
    <property type="project" value="UniProtKB"/>
</dbReference>
<dbReference type="GO" id="GO:0042127">
    <property type="term" value="P:regulation of cell population proliferation"/>
    <property type="evidence" value="ECO:0000250"/>
    <property type="project" value="UniProtKB"/>
</dbReference>
<dbReference type="InterPro" id="IPR016016">
    <property type="entry name" value="Clusterin"/>
</dbReference>
<dbReference type="InterPro" id="IPR000753">
    <property type="entry name" value="Clusterin-like"/>
</dbReference>
<dbReference type="InterPro" id="IPR016015">
    <property type="entry name" value="Clusterin_C"/>
</dbReference>
<dbReference type="InterPro" id="IPR033986">
    <property type="entry name" value="Clusterin_CS"/>
</dbReference>
<dbReference type="InterPro" id="IPR016014">
    <property type="entry name" value="Clusterin_N"/>
</dbReference>
<dbReference type="PANTHER" id="PTHR10970">
    <property type="entry name" value="CLUSTERIN"/>
    <property type="match status" value="1"/>
</dbReference>
<dbReference type="PANTHER" id="PTHR10970:SF1">
    <property type="entry name" value="CLUSTERIN"/>
    <property type="match status" value="1"/>
</dbReference>
<dbReference type="Pfam" id="PF01093">
    <property type="entry name" value="Clusterin"/>
    <property type="match status" value="1"/>
</dbReference>
<dbReference type="PIRSF" id="PIRSF002368">
    <property type="entry name" value="Clusterin"/>
    <property type="match status" value="1"/>
</dbReference>
<dbReference type="SMART" id="SM00035">
    <property type="entry name" value="CLa"/>
    <property type="match status" value="1"/>
</dbReference>
<dbReference type="SMART" id="SM00030">
    <property type="entry name" value="CLb"/>
    <property type="match status" value="1"/>
</dbReference>
<dbReference type="PROSITE" id="PS00492">
    <property type="entry name" value="CLUSTERIN_1"/>
    <property type="match status" value="1"/>
</dbReference>
<dbReference type="PROSITE" id="PS00493">
    <property type="entry name" value="CLUSTERIN_2"/>
    <property type="match status" value="1"/>
</dbReference>
<evidence type="ECO:0000250" key="1"/>
<evidence type="ECO:0000255" key="2"/>
<evidence type="ECO:0000305" key="3"/>
<comment type="function">
    <text evidence="1">Functions as extracellular chaperone that prevents aggregation of nonnative proteins. Prevents stress-induced aggregation of blood plasma proteins. Does not require ATP. Maintains partially unfolded proteins in a state appropriate for subsequent refolding by other chaperones, such as HSPA8/HSC70. Does not refold proteins by itself. Binding to cell surface receptors triggers internalization of the chaperone-client complex and subsequent lysosomal or proteasomal degradation. When secreted, protects cells against apoptosis and against cytolysis by complement: inhibits assembly of the complement membrane attack complex (MAC) by preventing polymerization of C9 pore component of the MAC complex. Intracellular forms interact with ubiquitin and SCF (SKP1-CUL1-F-box protein) E3 ubiquitin-protein ligase complexes and promote the ubiquitination and subsequent proteasomal degradation of target proteins. Modulates NF-kappa-B transcriptional activity. Promotes apoptosis when in the nucleus. Inhibits apoptosis when associated with the mitochondrial membrane by interference with BAX-dependent release of cytochrome c into the cytoplasm. Plays a role in the regulation of cell proliferation (By similarity).</text>
</comment>
<comment type="subunit">
    <text evidence="1">Antiparallel disulfide-linked heterodimer of an alpha chain and a beta chain. Self-associates and forms higher oligomers. Interacts with a broad range of misfolded proteins (By similarity).</text>
</comment>
<comment type="subcellular location">
    <subcellularLocation>
        <location>Secreted</location>
    </subcellularLocation>
    <subcellularLocation>
        <location evidence="1">Cytoplasmic vesicle</location>
        <location evidence="1">Secretory vesicle</location>
        <location evidence="1">Chromaffin granule</location>
    </subcellularLocation>
    <subcellularLocation>
        <location evidence="1">Nucleus</location>
    </subcellularLocation>
    <subcellularLocation>
        <location evidence="1">Cytoplasm</location>
    </subcellularLocation>
    <subcellularLocation>
        <location evidence="1">Mitochondrion membrane</location>
        <topology evidence="1">Peripheral membrane protein</topology>
        <orientation evidence="1">Cytoplasmic side</orientation>
    </subcellularLocation>
    <subcellularLocation>
        <location evidence="1">Cytoplasm</location>
        <location evidence="1">Cytosol</location>
    </subcellularLocation>
    <subcellularLocation>
        <location evidence="1">Endoplasmic reticulum</location>
    </subcellularLocation>
    <text evidence="1">Present in chromaffin granules. Can retrotranslocate from the secretory compartments to the cytosol upon cellular stress. Detected in perinuclear foci that may be aggresomes containing misfolded, ubiquitinated proteins. Detected at the mitochondrion membrane upon induction of apoptosis (By similarity).</text>
</comment>
<comment type="induction">
    <text>By different retroviral oncogenes.</text>
</comment>
<comment type="PTM">
    <text evidence="1">Proteolytically cleaved on its way through the secretory system, probably within the Golgi lumen.</text>
</comment>
<comment type="PTM">
    <text evidence="1">Polyubiquitinated, leading to proteasomal degradation.</text>
</comment>
<comment type="similarity">
    <text evidence="3">Belongs to the clusterin family.</text>
</comment>
<reference key="1">
    <citation type="journal article" date="1989" name="Oncogene Res.">
        <title>Expression of a novel gene encoding a 51.5 kD precursor protein is induced by different retroviral oncogenes in quail neuroretinal cells.</title>
        <authorList>
            <person name="Michel D."/>
            <person name="Gillet G."/>
            <person name="Volovitch M."/>
            <person name="Pessac B."/>
            <person name="Calothy G."/>
            <person name="Brun G."/>
        </authorList>
    </citation>
    <scope>NUCLEOTIDE SEQUENCE [MRNA]</scope>
    <source>
        <tissue>Neuroretina</tissue>
    </source>
</reference>
<reference key="2">
    <citation type="journal article" date="1995" name="Eur. J. Biochem.">
        <title>The expression of the avian clusterin gene can be driven by two alternative promoters with distinct regulatory elements.</title>
        <authorList>
            <person name="Michel D."/>
            <person name="Chatelain G."/>
            <person name="Herault Y."/>
            <person name="Brun G."/>
        </authorList>
    </citation>
    <scope>NUCLEOTIDE SEQUENCE [GENOMIC DNA]</scope>
</reference>
<keyword id="KW-0143">Chaperone</keyword>
<keyword id="KW-0963">Cytoplasm</keyword>
<keyword id="KW-0968">Cytoplasmic vesicle</keyword>
<keyword id="KW-1015">Disulfide bond</keyword>
<keyword id="KW-0256">Endoplasmic reticulum</keyword>
<keyword id="KW-0325">Glycoprotein</keyword>
<keyword id="KW-0472">Membrane</keyword>
<keyword id="KW-0496">Mitochondrion</keyword>
<keyword id="KW-0539">Nucleus</keyword>
<keyword id="KW-1185">Reference proteome</keyword>
<keyword id="KW-0964">Secreted</keyword>
<keyword id="KW-0732">Signal</keyword>
<keyword id="KW-0832">Ubl conjugation</keyword>
<name>CLUS_COTJA</name>
<accession>P14018</accession>
<organism>
    <name type="scientific">Coturnix japonica</name>
    <name type="common">Japanese quail</name>
    <name type="synonym">Coturnix coturnix japonica</name>
    <dbReference type="NCBI Taxonomy" id="93934"/>
    <lineage>
        <taxon>Eukaryota</taxon>
        <taxon>Metazoa</taxon>
        <taxon>Chordata</taxon>
        <taxon>Craniata</taxon>
        <taxon>Vertebrata</taxon>
        <taxon>Euteleostomi</taxon>
        <taxon>Archelosauria</taxon>
        <taxon>Archosauria</taxon>
        <taxon>Dinosauria</taxon>
        <taxon>Saurischia</taxon>
        <taxon>Theropoda</taxon>
        <taxon>Coelurosauria</taxon>
        <taxon>Aves</taxon>
        <taxon>Neognathae</taxon>
        <taxon>Galloanserae</taxon>
        <taxon>Galliformes</taxon>
        <taxon>Phasianidae</taxon>
        <taxon>Perdicinae</taxon>
        <taxon>Coturnix</taxon>
    </lineage>
</organism>
<proteinExistence type="evidence at transcript level"/>